<organism>
    <name type="scientific">Pisum sativum</name>
    <name type="common">Garden pea</name>
    <name type="synonym">Lathyrus oleraceus</name>
    <dbReference type="NCBI Taxonomy" id="3888"/>
    <lineage>
        <taxon>Eukaryota</taxon>
        <taxon>Viridiplantae</taxon>
        <taxon>Streptophyta</taxon>
        <taxon>Embryophyta</taxon>
        <taxon>Tracheophyta</taxon>
        <taxon>Spermatophyta</taxon>
        <taxon>Magnoliopsida</taxon>
        <taxon>eudicotyledons</taxon>
        <taxon>Gunneridae</taxon>
        <taxon>Pentapetalae</taxon>
        <taxon>rosids</taxon>
        <taxon>fabids</taxon>
        <taxon>Fabales</taxon>
        <taxon>Fabaceae</taxon>
        <taxon>Papilionoideae</taxon>
        <taxon>50 kb inversion clade</taxon>
        <taxon>NPAAA clade</taxon>
        <taxon>Hologalegina</taxon>
        <taxon>IRL clade</taxon>
        <taxon>Fabeae</taxon>
        <taxon>Pisum</taxon>
    </lineage>
</organism>
<comment type="catalytic activity">
    <reaction>
        <text>S-adenosyl 3-(methylsulfanyl)propylamine + putrescine = S-methyl-5'-thioadenosine + spermidine + H(+)</text>
        <dbReference type="Rhea" id="RHEA:12721"/>
        <dbReference type="ChEBI" id="CHEBI:15378"/>
        <dbReference type="ChEBI" id="CHEBI:17509"/>
        <dbReference type="ChEBI" id="CHEBI:57443"/>
        <dbReference type="ChEBI" id="CHEBI:57834"/>
        <dbReference type="ChEBI" id="CHEBI:326268"/>
        <dbReference type="EC" id="2.5.1.16"/>
    </reaction>
</comment>
<comment type="pathway">
    <text>Amine and polyamine biosynthesis; spermidine biosynthesis; spermidine from putrescine: step 1/1.</text>
</comment>
<comment type="similarity">
    <text evidence="3">Belongs to the spermidine/spermine synthase family.</text>
</comment>
<sequence length="334" mass="36701">MAAPENTLHSTDSPLKRQREDEVNGVSDTLSKEPQPNGLSSVIPGWFSEISPMWPGEAHSLKVEKILFQGKSDYQDVMVFQSATYGKVLILDGVIQLTERDECAYQEMITHLPLCSIPNPKKVLVIGGGDGGVLREVARHSSVEKIDICEIDKMVVDVSKEYFPDIAVGFADPRVTLNIGDGVAFLKAAPEGTYDAVIVDSSDPIGPAQELFEKPFFESVARALRPGGVVCTQAESIWLHMHIIEDIVVNCRQVFKGSVNYAWTTVPTYPSGMIGFMLCSTEGPSVDFKHPVNPIDENDSQQAARPLKFYNREIHSAAFCLPSFAKRAIASKEN</sequence>
<dbReference type="EC" id="2.5.1.16"/>
<dbReference type="EMBL" id="AF043108">
    <property type="protein sequence ID" value="AAD02231.1"/>
    <property type="molecule type" value="mRNA"/>
</dbReference>
<dbReference type="SMR" id="Q9ZTR1"/>
<dbReference type="OrthoDB" id="38125at2759"/>
<dbReference type="UniPathway" id="UPA00248">
    <property type="reaction ID" value="UER00314"/>
</dbReference>
<dbReference type="GO" id="GO:0005829">
    <property type="term" value="C:cytosol"/>
    <property type="evidence" value="ECO:0007669"/>
    <property type="project" value="TreeGrafter"/>
</dbReference>
<dbReference type="GO" id="GO:0004766">
    <property type="term" value="F:spermidine synthase activity"/>
    <property type="evidence" value="ECO:0007669"/>
    <property type="project" value="UniProtKB-EC"/>
</dbReference>
<dbReference type="GO" id="GO:0008295">
    <property type="term" value="P:spermidine biosynthetic process"/>
    <property type="evidence" value="ECO:0007669"/>
    <property type="project" value="UniProtKB-UniPathway"/>
</dbReference>
<dbReference type="CDD" id="cd02440">
    <property type="entry name" value="AdoMet_MTases"/>
    <property type="match status" value="1"/>
</dbReference>
<dbReference type="FunFam" id="2.30.140.10:FF:000003">
    <property type="entry name" value="Spermidine synthase 1"/>
    <property type="match status" value="1"/>
</dbReference>
<dbReference type="FunFam" id="3.40.50.150:FF:000048">
    <property type="entry name" value="Spermidine synthase 1"/>
    <property type="match status" value="1"/>
</dbReference>
<dbReference type="Gene3D" id="2.30.140.10">
    <property type="entry name" value="Spermidine synthase, tetramerisation domain"/>
    <property type="match status" value="1"/>
</dbReference>
<dbReference type="Gene3D" id="3.40.50.150">
    <property type="entry name" value="Vaccinia Virus protein VP39"/>
    <property type="match status" value="1"/>
</dbReference>
<dbReference type="HAMAP" id="MF_00198">
    <property type="entry name" value="Spermidine_synth"/>
    <property type="match status" value="1"/>
</dbReference>
<dbReference type="InterPro" id="IPR030374">
    <property type="entry name" value="PABS"/>
</dbReference>
<dbReference type="InterPro" id="IPR030373">
    <property type="entry name" value="PABS_CS"/>
</dbReference>
<dbReference type="InterPro" id="IPR029063">
    <property type="entry name" value="SAM-dependent_MTases_sf"/>
</dbReference>
<dbReference type="InterPro" id="IPR001045">
    <property type="entry name" value="Spermi_synthase"/>
</dbReference>
<dbReference type="InterPro" id="IPR030668">
    <property type="entry name" value="Spermi_synthase_euk"/>
</dbReference>
<dbReference type="InterPro" id="IPR035246">
    <property type="entry name" value="Spermidine_synt_N"/>
</dbReference>
<dbReference type="InterPro" id="IPR037163">
    <property type="entry name" value="Spermidine_synt_N_sf"/>
</dbReference>
<dbReference type="NCBIfam" id="NF002010">
    <property type="entry name" value="PRK00811.1"/>
    <property type="match status" value="1"/>
</dbReference>
<dbReference type="NCBIfam" id="TIGR00417">
    <property type="entry name" value="speE"/>
    <property type="match status" value="1"/>
</dbReference>
<dbReference type="PANTHER" id="PTHR11558:SF11">
    <property type="entry name" value="SPERMIDINE SYNTHASE"/>
    <property type="match status" value="1"/>
</dbReference>
<dbReference type="PANTHER" id="PTHR11558">
    <property type="entry name" value="SPERMIDINE/SPERMINE SYNTHASE"/>
    <property type="match status" value="1"/>
</dbReference>
<dbReference type="Pfam" id="PF17284">
    <property type="entry name" value="Spermine_synt_N"/>
    <property type="match status" value="1"/>
</dbReference>
<dbReference type="Pfam" id="PF01564">
    <property type="entry name" value="Spermine_synth"/>
    <property type="match status" value="1"/>
</dbReference>
<dbReference type="PIRSF" id="PIRSF000502">
    <property type="entry name" value="Spermidine_synth"/>
    <property type="match status" value="1"/>
</dbReference>
<dbReference type="SUPFAM" id="SSF53335">
    <property type="entry name" value="S-adenosyl-L-methionine-dependent methyltransferases"/>
    <property type="match status" value="1"/>
</dbReference>
<dbReference type="PROSITE" id="PS01330">
    <property type="entry name" value="PABS_1"/>
    <property type="match status" value="1"/>
</dbReference>
<dbReference type="PROSITE" id="PS51006">
    <property type="entry name" value="PABS_2"/>
    <property type="match status" value="1"/>
</dbReference>
<proteinExistence type="evidence at transcript level"/>
<gene>
    <name type="primary">SPDSYN1</name>
</gene>
<reference key="1">
    <citation type="journal article" date="1999" name="Plant Mol. Biol.">
        <title>Differential expression of two spermidine synthase genes during early fruit development and in vegetative tissues of pea.</title>
        <authorList>
            <person name="Alabadi D."/>
            <person name="Carbonell J."/>
        </authorList>
    </citation>
    <scope>NUCLEOTIDE SEQUENCE [MRNA]</scope>
    <source>
        <strain>cv. Alaska</strain>
        <tissue>Ovary</tissue>
    </source>
</reference>
<accession>Q9ZTR1</accession>
<protein>
    <recommendedName>
        <fullName>Spermidine synthase 1</fullName>
        <shortName>SPDSY 1</shortName>
        <ecNumber>2.5.1.16</ecNumber>
    </recommendedName>
    <alternativeName>
        <fullName>Putrescine aminopropyltransferase 1</fullName>
    </alternativeName>
</protein>
<keyword id="KW-0620">Polyamine biosynthesis</keyword>
<keyword id="KW-0745">Spermidine biosynthesis</keyword>
<keyword id="KW-0808">Transferase</keyword>
<feature type="chain" id="PRO_0000156458" description="Spermidine synthase 1">
    <location>
        <begin position="1"/>
        <end position="334"/>
    </location>
</feature>
<feature type="domain" description="PABS">
    <location>
        <begin position="44"/>
        <end position="281"/>
    </location>
</feature>
<feature type="region of interest" description="Disordered" evidence="2">
    <location>
        <begin position="1"/>
        <end position="37"/>
    </location>
</feature>
<feature type="compositionally biased region" description="Polar residues" evidence="2">
    <location>
        <begin position="26"/>
        <end position="37"/>
    </location>
</feature>
<feature type="active site" description="Proton acceptor" evidence="1">
    <location>
        <position position="200"/>
    </location>
</feature>
<feature type="binding site" evidence="1">
    <location>
        <position position="75"/>
    </location>
    <ligand>
        <name>S-adenosyl 3-(methylsulfanyl)propylamine</name>
        <dbReference type="ChEBI" id="CHEBI:57443"/>
    </ligand>
</feature>
<feature type="binding site" evidence="1">
    <location>
        <position position="105"/>
    </location>
    <ligand>
        <name>putrescine</name>
        <dbReference type="ChEBI" id="CHEBI:326268"/>
    </ligand>
</feature>
<feature type="binding site" evidence="1">
    <location>
        <position position="106"/>
    </location>
    <ligand>
        <name>S-adenosyl 3-(methylsulfanyl)propylamine</name>
        <dbReference type="ChEBI" id="CHEBI:57443"/>
    </ligand>
</feature>
<feature type="binding site" evidence="1">
    <location>
        <position position="130"/>
    </location>
    <ligand>
        <name>S-adenosyl 3-(methylsulfanyl)propylamine</name>
        <dbReference type="ChEBI" id="CHEBI:57443"/>
    </ligand>
</feature>
<feature type="binding site" evidence="1">
    <location>
        <position position="150"/>
    </location>
    <ligand>
        <name>S-adenosyl 3-(methylsulfanyl)propylamine</name>
        <dbReference type="ChEBI" id="CHEBI:57443"/>
    </ligand>
</feature>
<feature type="binding site" evidence="1">
    <location>
        <begin position="181"/>
        <end position="182"/>
    </location>
    <ligand>
        <name>S-adenosyl 3-(methylsulfanyl)propylamine</name>
        <dbReference type="ChEBI" id="CHEBI:57443"/>
    </ligand>
</feature>
<feature type="binding site" evidence="1">
    <location>
        <begin position="200"/>
        <end position="203"/>
    </location>
    <ligand>
        <name>putrescine</name>
        <dbReference type="ChEBI" id="CHEBI:326268"/>
    </ligand>
</feature>
<feature type="binding site" evidence="1">
    <location>
        <position position="200"/>
    </location>
    <ligand>
        <name>S-adenosyl 3-(methylsulfanyl)propylamine</name>
        <dbReference type="ChEBI" id="CHEBI:57443"/>
    </ligand>
</feature>
<feature type="binding site" evidence="1">
    <location>
        <position position="269"/>
    </location>
    <ligand>
        <name>putrescine</name>
        <dbReference type="ChEBI" id="CHEBI:326268"/>
    </ligand>
</feature>
<name>SPDS1_PEA</name>
<evidence type="ECO:0000250" key="1"/>
<evidence type="ECO:0000256" key="2">
    <source>
        <dbReference type="SAM" id="MobiDB-lite"/>
    </source>
</evidence>
<evidence type="ECO:0000305" key="3"/>